<reference key="1">
    <citation type="journal article" date="2004" name="Proc. Natl. Acad. Sci. U.S.A.">
        <title>Structural flexibility in the Burkholderia mallei genome.</title>
        <authorList>
            <person name="Nierman W.C."/>
            <person name="DeShazer D."/>
            <person name="Kim H.S."/>
            <person name="Tettelin H."/>
            <person name="Nelson K.E."/>
            <person name="Feldblyum T.V."/>
            <person name="Ulrich R.L."/>
            <person name="Ronning C.M."/>
            <person name="Brinkac L.M."/>
            <person name="Daugherty S.C."/>
            <person name="Davidsen T.D."/>
            <person name="DeBoy R.T."/>
            <person name="Dimitrov G."/>
            <person name="Dodson R.J."/>
            <person name="Durkin A.S."/>
            <person name="Gwinn M.L."/>
            <person name="Haft D.H."/>
            <person name="Khouri H.M."/>
            <person name="Kolonay J.F."/>
            <person name="Madupu R."/>
            <person name="Mohammoud Y."/>
            <person name="Nelson W.C."/>
            <person name="Radune D."/>
            <person name="Romero C.M."/>
            <person name="Sarria S."/>
            <person name="Selengut J."/>
            <person name="Shamblin C."/>
            <person name="Sullivan S.A."/>
            <person name="White O."/>
            <person name="Yu Y."/>
            <person name="Zafar N."/>
            <person name="Zhou L."/>
            <person name="Fraser C.M."/>
        </authorList>
    </citation>
    <scope>NUCLEOTIDE SEQUENCE [LARGE SCALE GENOMIC DNA]</scope>
    <source>
        <strain>ATCC 23344</strain>
    </source>
</reference>
<evidence type="ECO:0000255" key="1">
    <source>
        <dbReference type="HAMAP-Rule" id="MF_00248"/>
    </source>
</evidence>
<dbReference type="EC" id="3.4.25.2" evidence="1"/>
<dbReference type="EMBL" id="CP000010">
    <property type="protein sequence ID" value="AAU48469.1"/>
    <property type="molecule type" value="Genomic_DNA"/>
</dbReference>
<dbReference type="RefSeq" id="WP_004203414.1">
    <property type="nucleotide sequence ID" value="NC_006348.1"/>
</dbReference>
<dbReference type="RefSeq" id="YP_104728.1">
    <property type="nucleotide sequence ID" value="NC_006348.1"/>
</dbReference>
<dbReference type="SMR" id="Q62EZ9"/>
<dbReference type="MEROPS" id="T01.006"/>
<dbReference type="GeneID" id="92980919"/>
<dbReference type="KEGG" id="bma:BMA3254"/>
<dbReference type="PATRIC" id="fig|243160.12.peg.3335"/>
<dbReference type="eggNOG" id="COG5405">
    <property type="taxonomic scope" value="Bacteria"/>
</dbReference>
<dbReference type="HOGENOM" id="CLU_093872_1_0_4"/>
<dbReference type="Proteomes" id="UP000006693">
    <property type="component" value="Chromosome 1"/>
</dbReference>
<dbReference type="GO" id="GO:0009376">
    <property type="term" value="C:HslUV protease complex"/>
    <property type="evidence" value="ECO:0007669"/>
    <property type="project" value="UniProtKB-UniRule"/>
</dbReference>
<dbReference type="GO" id="GO:0005839">
    <property type="term" value="C:proteasome core complex"/>
    <property type="evidence" value="ECO:0007669"/>
    <property type="project" value="InterPro"/>
</dbReference>
<dbReference type="GO" id="GO:0046872">
    <property type="term" value="F:metal ion binding"/>
    <property type="evidence" value="ECO:0007669"/>
    <property type="project" value="UniProtKB-KW"/>
</dbReference>
<dbReference type="GO" id="GO:0004298">
    <property type="term" value="F:threonine-type endopeptidase activity"/>
    <property type="evidence" value="ECO:0007669"/>
    <property type="project" value="UniProtKB-KW"/>
</dbReference>
<dbReference type="GO" id="GO:0051603">
    <property type="term" value="P:proteolysis involved in protein catabolic process"/>
    <property type="evidence" value="ECO:0007669"/>
    <property type="project" value="InterPro"/>
</dbReference>
<dbReference type="CDD" id="cd01913">
    <property type="entry name" value="protease_HslV"/>
    <property type="match status" value="1"/>
</dbReference>
<dbReference type="FunFam" id="3.60.20.10:FF:000002">
    <property type="entry name" value="ATP-dependent protease subunit HslV"/>
    <property type="match status" value="1"/>
</dbReference>
<dbReference type="Gene3D" id="3.60.20.10">
    <property type="entry name" value="Glutamine Phosphoribosylpyrophosphate, subunit 1, domain 1"/>
    <property type="match status" value="1"/>
</dbReference>
<dbReference type="HAMAP" id="MF_00248">
    <property type="entry name" value="HslV"/>
    <property type="match status" value="1"/>
</dbReference>
<dbReference type="InterPro" id="IPR022281">
    <property type="entry name" value="ATP-dep_Prtase_HsIV_su"/>
</dbReference>
<dbReference type="InterPro" id="IPR029055">
    <property type="entry name" value="Ntn_hydrolases_N"/>
</dbReference>
<dbReference type="InterPro" id="IPR001353">
    <property type="entry name" value="Proteasome_sua/b"/>
</dbReference>
<dbReference type="InterPro" id="IPR023333">
    <property type="entry name" value="Proteasome_suB-type"/>
</dbReference>
<dbReference type="NCBIfam" id="TIGR03692">
    <property type="entry name" value="ATP_dep_HslV"/>
    <property type="match status" value="1"/>
</dbReference>
<dbReference type="NCBIfam" id="NF003964">
    <property type="entry name" value="PRK05456.1"/>
    <property type="match status" value="1"/>
</dbReference>
<dbReference type="PANTHER" id="PTHR32194:SF0">
    <property type="entry name" value="ATP-DEPENDENT PROTEASE SUBUNIT HSLV"/>
    <property type="match status" value="1"/>
</dbReference>
<dbReference type="PANTHER" id="PTHR32194">
    <property type="entry name" value="METALLOPROTEASE TLDD"/>
    <property type="match status" value="1"/>
</dbReference>
<dbReference type="Pfam" id="PF00227">
    <property type="entry name" value="Proteasome"/>
    <property type="match status" value="1"/>
</dbReference>
<dbReference type="PIRSF" id="PIRSF039093">
    <property type="entry name" value="HslV"/>
    <property type="match status" value="1"/>
</dbReference>
<dbReference type="SUPFAM" id="SSF56235">
    <property type="entry name" value="N-terminal nucleophile aminohydrolases (Ntn hydrolases)"/>
    <property type="match status" value="1"/>
</dbReference>
<dbReference type="PROSITE" id="PS51476">
    <property type="entry name" value="PROTEASOME_BETA_2"/>
    <property type="match status" value="1"/>
</dbReference>
<sequence length="178" mass="19053">MEQFHGTTILSVRRGDKVALGGDGQVTLGNIVMKGGARKVRRIYNNQVLVGFAGGTADAFSLLDRFEAKLEKHQGNLTRAAVELAKDWRTDRLLRRLEAMLIAADATTTLVITGNGDVLDPEGGICAIGSGGSYAQAAARALAENTDLSPREIVEKALGIAGDMCIYTNHNRIIETIE</sequence>
<keyword id="KW-0021">Allosteric enzyme</keyword>
<keyword id="KW-0963">Cytoplasm</keyword>
<keyword id="KW-0378">Hydrolase</keyword>
<keyword id="KW-0479">Metal-binding</keyword>
<keyword id="KW-0645">Protease</keyword>
<keyword id="KW-1185">Reference proteome</keyword>
<keyword id="KW-0915">Sodium</keyword>
<keyword id="KW-0888">Threonine protease</keyword>
<feature type="chain" id="PRO_0000148097" description="ATP-dependent protease subunit HslV">
    <location>
        <begin position="1"/>
        <end position="178"/>
    </location>
</feature>
<feature type="active site" evidence="1">
    <location>
        <position position="7"/>
    </location>
</feature>
<feature type="binding site" evidence="1">
    <location>
        <position position="162"/>
    </location>
    <ligand>
        <name>Na(+)</name>
        <dbReference type="ChEBI" id="CHEBI:29101"/>
    </ligand>
</feature>
<feature type="binding site" evidence="1">
    <location>
        <position position="165"/>
    </location>
    <ligand>
        <name>Na(+)</name>
        <dbReference type="ChEBI" id="CHEBI:29101"/>
    </ligand>
</feature>
<feature type="binding site" evidence="1">
    <location>
        <position position="168"/>
    </location>
    <ligand>
        <name>Na(+)</name>
        <dbReference type="ChEBI" id="CHEBI:29101"/>
    </ligand>
</feature>
<proteinExistence type="inferred from homology"/>
<protein>
    <recommendedName>
        <fullName evidence="1">ATP-dependent protease subunit HslV</fullName>
        <ecNumber evidence="1">3.4.25.2</ecNumber>
    </recommendedName>
</protein>
<name>HSLV_BURMA</name>
<comment type="function">
    <text evidence="1">Protease subunit of a proteasome-like degradation complex believed to be a general protein degrading machinery.</text>
</comment>
<comment type="catalytic activity">
    <reaction evidence="1">
        <text>ATP-dependent cleavage of peptide bonds with broad specificity.</text>
        <dbReference type="EC" id="3.4.25.2"/>
    </reaction>
</comment>
<comment type="activity regulation">
    <text evidence="1">Allosterically activated by HslU binding.</text>
</comment>
<comment type="subunit">
    <text evidence="1">A double ring-shaped homohexamer of HslV is capped on each side by a ring-shaped HslU homohexamer. The assembly of the HslU/HslV complex is dependent on binding of ATP.</text>
</comment>
<comment type="subcellular location">
    <subcellularLocation>
        <location evidence="1">Cytoplasm</location>
    </subcellularLocation>
</comment>
<comment type="similarity">
    <text evidence="1">Belongs to the peptidase T1B family. HslV subfamily.</text>
</comment>
<accession>Q62EZ9</accession>
<gene>
    <name evidence="1" type="primary">hslV</name>
    <name type="ordered locus">BMA3254</name>
</gene>
<organism>
    <name type="scientific">Burkholderia mallei (strain ATCC 23344)</name>
    <dbReference type="NCBI Taxonomy" id="243160"/>
    <lineage>
        <taxon>Bacteria</taxon>
        <taxon>Pseudomonadati</taxon>
        <taxon>Pseudomonadota</taxon>
        <taxon>Betaproteobacteria</taxon>
        <taxon>Burkholderiales</taxon>
        <taxon>Burkholderiaceae</taxon>
        <taxon>Burkholderia</taxon>
        <taxon>pseudomallei group</taxon>
    </lineage>
</organism>